<comment type="function">
    <text evidence="6 8">Reducing polyketide synthase; part of the gene cluster that mediates the biosynthesis of radicicol, a resorcylic acid lactone (RAL) that irreversibly inhibits the HSP90 molecular chaperone, an important target for cancer chemotherapy (PubMed:18567690). The radicicol cluster encodes only two apparent post-PKS enzymes, a cytochrome P450 monooxygenase (rdc4) and a non-heme halogenase (rdc2) that could introduce the epoxide and the chlorine, respectively. If this cluster includes all the genes required for radicicol biosynthesis, the remaining structural features of radicicol are presumably generated by the PKSs rdc1 and rdc5. The C-2' ketone could arise if the R-PKS rdc5 and NR-PKS rdc1 each carry out four iterations, in contrast to the five iteration-three iteration split for the hypothemycin PKSs. The origin of the cis 5',6' double bond is not known. The radicicol R-PKS rdc5 ER domain may catalyze either double bond isomerization or reduction in the third iteration (Probable) (PubMed:18567690).</text>
</comment>
<comment type="pathway">
    <text evidence="6">Secondary metabolite biosynthesis.</text>
</comment>
<comment type="biotechnology">
    <text>Radicicol is an important pharmacophore as an inhibitor of heat shock protein 90 (Hsp90), an ATP-dependent chaperone involved in the post-translational maturation and stabilization of over one hundred proteins, and which activity has been implicated in diverse pathologies ranging from oncology to neurodegenerative and infectious diseases (PubMed:19860733).</text>
</comment>
<proteinExistence type="evidence at protein level"/>
<gene>
    <name evidence="7" type="primary">rdc5</name>
</gene>
<sequence length="2383" mass="260150">MPSATAQDARAPIAIIGMSCRFPGDAEDPLKFWDLLKEGREAYSEKTHRYNEEAFYHPGGQFNNKRQNVLPVKGGYMLKQDPYVFDAAFFNITAAEAISFDPKQRIAMEVTYEAFENAGMTLQKAAGTRTACYIGTSMSDYRDSIVRDFGNYPKYHLLGTSDEMISNRISHFFDLRGPSATIETACSSSHVATHIACQSIQSGESDMAVVGGIGMLLVPESTMQLNNLGFLSAFGQSRAFDASGAGYGRGEGCGIFILKRLDKAMEDGDTIRAIIRGSGVNSDGWTQGVTMPSGDAQASLIEYVYKSNGLDYEGTQYVEAHGTGTKVGDPTEAEALHRTIGQPTPKRKKLWMGSVKTNIGHLEAAAGAASMVKGVLAMEHGFIPPTLHFKNPNPAIKFDEWQLGVPTKLMPWPACQTRRMSTSAFGMGGTNAHLVLERPNEPAIPILERGAIGVSRKNQKRLFVFSSHDQAGFKRICDRLVEHVDTLGPKSSNPDYLANLAHTLAVGRSGLTWKSSCFAENIVELREHLTSSSLPEGAVRAAGGQTRIGFVFTGQGAQWARMGVELMDRKVFGKSVAKSTALLQEMGCEWDPVVELSKSQKESQLVKPEISQPICTILQIALIDELRSWGIRPAKVVGHSSGEIAAAYCMGALTHRDALAAAYFRGKASANVKRRGGMMAVGTTPEDAKKLITETKAQATVACVNSPRSITLSGDVDALEALRETFEKQGVFARRLKVDVAYHSSHMRSCSAEYQSSIMDLEPSELDGANESKEPILMVSSVTGGLVDAEALGPYYWIRNLISPVLFSDALKELVCPADSGGSSDVDMLIEIGPHSALRAPIEQILSHHDIKNVEYASMLTRGESGSETILGFAAELFRRGVPFDIAKANDDAQCRLLTDLPPYPFNHSQQFRAESRLQRETLTQQNPTKSLIGAERPSLDEHERVWRGFINLDDEPWLRDHTVGSTVLFPGAAVITIVLEAAQQMAEAGKTIRSLTLRDISFMAMMTLLEGTPTEVITHVRPHLVATTGTTPATWWEFTVSSCTGVTSNVRNNCRGLFSINYEDSRSSHMEMELERFEGDRVATYHQIKKECVEVISKQAFYDTLARSALAYGPHFQGVDNCRPGNGQTAFEVIVSDLGETFNKDKLTRPFLIHGGTLDSIFQAWVGSTKDSNGPGSFGFEKPLLPKSIGELEISLDFPGEVGYSLNGLSTSKKHGFSEWSTDITMFDRNVSKLLLSVKDFHLAELEVEDADRPDRTEHVDVDPAEISSEPKWNYALDFMSTQEIKQVVETASSSDDKLMQFISLAIHQRPNLEILELVESANQLRQTAVSKLPRGRLLPNQASCAILGGDYDNNNESAAAFGRIFGLDSSEAVPSDVAPADLVIANFNISNLEDIAERLVVLAKPEARILLIADKKVDSSVTSLADKGFDLVFSTEADSESLSLYCFGKKEEPQPERLTNGSTGQEVVILEPSSLSAESDRFSKDLQHALDNIGYNVSTVTDIHGAHAAKARIYVSLLEIEQPVLENLSQSEFEGLRDLLLNCDRLLWITRGDGPSLQLVDGFSRTIRSEFAGVEFQVLHLSGKNSRQGPSLAAQIVFKQSTESEFREDDGHLQISRWYRSVEEDDHIRNHLLDSIRTVSLPVGGNIEDNSSYRLAVGKPGLLNTLHFVSDDNTEAPLADNEVEMQVKASGINFRDIMGSMGLLPVSGIGQEASGIVVRVGKLGASSLKPGDRISTLTVGGTHATRIRCDYRVAKKIPEGMSFEEAAGIPVVHCTAYYALVKLAKLRPGQSVLIHAAAGGTGQAALQLAKHLGLTIFATVGTDTKRALIREKYGVPDENIFHSRDGSFVKGIERATNGRGVDCVLNSLSGELLRLSWGCLATFGTFVEIGLRDITDNMRLDMRPFAKSTTFSFINMVTLLQENPDAMGEILESVFEMIHQNVLQPVFPVTVYPVGKVEEAFRLMQQGKHVGKMILSFAAGDARAPVLCRAKDSFKLDPNATYLFIGGLGGLGRSMAVGFVACGARNIAFLSRSGDSKPEAKAVVDELRELGTRVQVYLGDVSDEASFRGAMEQCSRELPPVKGVIQMAMVLRDVVFEKMKYDDWTTGLRPKVQGTWNLHTFFDKDRPLDFMIFFSSIAGVFGNPSQAQYAAGNTYQDSLAKYRRDRGLKAVSVNLGIMRDVGVIAEGDSHFMQQWEEVLGIREPAFHALIKSIINGQLETSNIREAAKCPVQVTVGLGTGDILARNKIREPDYFRDPRFGALAVCSSTSTAAASSGENGVSIASQLAGLSNEADPEEAAGPIITKALVSKLAKILQVPPSEIDSSRPMYRYGVDSLVAIEVRNWITKEMSANMSLMDILGAMPMEQFAVQIAKKSKLVGGS</sequence>
<organism>
    <name type="scientific">Metacordyceps chlamydosporia</name>
    <name type="common">Nematophagous fungus</name>
    <name type="synonym">Pochonia chlamydosporia</name>
    <dbReference type="NCBI Taxonomy" id="280754"/>
    <lineage>
        <taxon>Eukaryota</taxon>
        <taxon>Fungi</taxon>
        <taxon>Dikarya</taxon>
        <taxon>Ascomycota</taxon>
        <taxon>Pezizomycotina</taxon>
        <taxon>Sordariomycetes</taxon>
        <taxon>Hypocreomycetidae</taxon>
        <taxon>Hypocreales</taxon>
        <taxon>Clavicipitaceae</taxon>
        <taxon>Pochonia</taxon>
    </lineage>
</organism>
<dbReference type="EC" id="2.3.1.-" evidence="8"/>
<dbReference type="EMBL" id="EU520419">
    <property type="protein sequence ID" value="ACD39774.1"/>
    <property type="molecule type" value="Genomic_DNA"/>
</dbReference>
<dbReference type="SMR" id="B3FWU0"/>
<dbReference type="GO" id="GO:0004312">
    <property type="term" value="F:fatty acid synthase activity"/>
    <property type="evidence" value="ECO:0007669"/>
    <property type="project" value="TreeGrafter"/>
</dbReference>
<dbReference type="GO" id="GO:0016491">
    <property type="term" value="F:oxidoreductase activity"/>
    <property type="evidence" value="ECO:0007669"/>
    <property type="project" value="UniProtKB-KW"/>
</dbReference>
<dbReference type="GO" id="GO:0031177">
    <property type="term" value="F:phosphopantetheine binding"/>
    <property type="evidence" value="ECO:0007669"/>
    <property type="project" value="InterPro"/>
</dbReference>
<dbReference type="GO" id="GO:0008270">
    <property type="term" value="F:zinc ion binding"/>
    <property type="evidence" value="ECO:0007669"/>
    <property type="project" value="InterPro"/>
</dbReference>
<dbReference type="GO" id="GO:0006633">
    <property type="term" value="P:fatty acid biosynthetic process"/>
    <property type="evidence" value="ECO:0007669"/>
    <property type="project" value="TreeGrafter"/>
</dbReference>
<dbReference type="GO" id="GO:0030639">
    <property type="term" value="P:polyketide biosynthetic process"/>
    <property type="evidence" value="ECO:0007669"/>
    <property type="project" value="UniProtKB-ARBA"/>
</dbReference>
<dbReference type="CDD" id="cd05195">
    <property type="entry name" value="enoyl_red"/>
    <property type="match status" value="1"/>
</dbReference>
<dbReference type="CDD" id="cd00833">
    <property type="entry name" value="PKS"/>
    <property type="match status" value="1"/>
</dbReference>
<dbReference type="FunFam" id="3.40.50.720:FF:000209">
    <property type="entry name" value="Polyketide synthase Pks12"/>
    <property type="match status" value="1"/>
</dbReference>
<dbReference type="Gene3D" id="3.30.70.3290">
    <property type="match status" value="1"/>
</dbReference>
<dbReference type="Gene3D" id="3.40.47.10">
    <property type="match status" value="1"/>
</dbReference>
<dbReference type="Gene3D" id="1.10.1200.10">
    <property type="entry name" value="ACP-like"/>
    <property type="match status" value="1"/>
</dbReference>
<dbReference type="Gene3D" id="3.40.366.10">
    <property type="entry name" value="Malonyl-Coenzyme A Acyl Carrier Protein, domain 2"/>
    <property type="match status" value="1"/>
</dbReference>
<dbReference type="Gene3D" id="3.90.180.10">
    <property type="entry name" value="Medium-chain alcohol dehydrogenases, catalytic domain"/>
    <property type="match status" value="1"/>
</dbReference>
<dbReference type="Gene3D" id="3.40.50.720">
    <property type="entry name" value="NAD(P)-binding Rossmann-like Domain"/>
    <property type="match status" value="1"/>
</dbReference>
<dbReference type="Gene3D" id="3.10.129.110">
    <property type="entry name" value="Polyketide synthase dehydratase"/>
    <property type="match status" value="1"/>
</dbReference>
<dbReference type="InterPro" id="IPR001227">
    <property type="entry name" value="Ac_transferase_dom_sf"/>
</dbReference>
<dbReference type="InterPro" id="IPR036736">
    <property type="entry name" value="ACP-like_sf"/>
</dbReference>
<dbReference type="InterPro" id="IPR014043">
    <property type="entry name" value="Acyl_transferase_dom"/>
</dbReference>
<dbReference type="InterPro" id="IPR016035">
    <property type="entry name" value="Acyl_Trfase/lysoPLipase"/>
</dbReference>
<dbReference type="InterPro" id="IPR013154">
    <property type="entry name" value="ADH-like_N"/>
</dbReference>
<dbReference type="InterPro" id="IPR011032">
    <property type="entry name" value="GroES-like_sf"/>
</dbReference>
<dbReference type="InterPro" id="IPR014031">
    <property type="entry name" value="Ketoacyl_synth_C"/>
</dbReference>
<dbReference type="InterPro" id="IPR014030">
    <property type="entry name" value="Ketoacyl_synth_N"/>
</dbReference>
<dbReference type="InterPro" id="IPR016036">
    <property type="entry name" value="Malonyl_transacylase_ACP-bd"/>
</dbReference>
<dbReference type="InterPro" id="IPR036291">
    <property type="entry name" value="NAD(P)-bd_dom_sf"/>
</dbReference>
<dbReference type="InterPro" id="IPR056501">
    <property type="entry name" value="NAD-bd_HRPKS_sdrA"/>
</dbReference>
<dbReference type="InterPro" id="IPR032821">
    <property type="entry name" value="PKS_assoc"/>
</dbReference>
<dbReference type="InterPro" id="IPR020841">
    <property type="entry name" value="PKS_Beta-ketoAc_synthase_dom"/>
</dbReference>
<dbReference type="InterPro" id="IPR042104">
    <property type="entry name" value="PKS_dehydratase_sf"/>
</dbReference>
<dbReference type="InterPro" id="IPR020807">
    <property type="entry name" value="PKS_DH"/>
</dbReference>
<dbReference type="InterPro" id="IPR049551">
    <property type="entry name" value="PKS_DH_C"/>
</dbReference>
<dbReference type="InterPro" id="IPR049552">
    <property type="entry name" value="PKS_DH_N"/>
</dbReference>
<dbReference type="InterPro" id="IPR020843">
    <property type="entry name" value="PKS_ER"/>
</dbReference>
<dbReference type="InterPro" id="IPR013968">
    <property type="entry name" value="PKS_KR"/>
</dbReference>
<dbReference type="InterPro" id="IPR049900">
    <property type="entry name" value="PKS_mFAS_DH"/>
</dbReference>
<dbReference type="InterPro" id="IPR050091">
    <property type="entry name" value="PKS_NRPS_Biosynth_Enz"/>
</dbReference>
<dbReference type="InterPro" id="IPR020806">
    <property type="entry name" value="PKS_PP-bd"/>
</dbReference>
<dbReference type="InterPro" id="IPR009081">
    <property type="entry name" value="PP-bd_ACP"/>
</dbReference>
<dbReference type="InterPro" id="IPR006162">
    <property type="entry name" value="Ppantetheine_attach_site"/>
</dbReference>
<dbReference type="InterPro" id="IPR002364">
    <property type="entry name" value="Quin_OxRdtase/zeta-crystal_CS"/>
</dbReference>
<dbReference type="InterPro" id="IPR016039">
    <property type="entry name" value="Thiolase-like"/>
</dbReference>
<dbReference type="PANTHER" id="PTHR43775:SF29">
    <property type="entry name" value="ASPERFURANONE POLYKETIDE SYNTHASE AFOG-RELATED"/>
    <property type="match status" value="1"/>
</dbReference>
<dbReference type="PANTHER" id="PTHR43775">
    <property type="entry name" value="FATTY ACID SYNTHASE"/>
    <property type="match status" value="1"/>
</dbReference>
<dbReference type="Pfam" id="PF23297">
    <property type="entry name" value="ACP_SdgA_C"/>
    <property type="match status" value="1"/>
</dbReference>
<dbReference type="Pfam" id="PF00698">
    <property type="entry name" value="Acyl_transf_1"/>
    <property type="match status" value="1"/>
</dbReference>
<dbReference type="Pfam" id="PF08240">
    <property type="entry name" value="ADH_N"/>
    <property type="match status" value="1"/>
</dbReference>
<dbReference type="Pfam" id="PF13602">
    <property type="entry name" value="ADH_zinc_N_2"/>
    <property type="match status" value="1"/>
</dbReference>
<dbReference type="Pfam" id="PF16197">
    <property type="entry name" value="KAsynt_C_assoc"/>
    <property type="match status" value="1"/>
</dbReference>
<dbReference type="Pfam" id="PF00109">
    <property type="entry name" value="ketoacyl-synt"/>
    <property type="match status" value="1"/>
</dbReference>
<dbReference type="Pfam" id="PF02801">
    <property type="entry name" value="Ketoacyl-synt_C"/>
    <property type="match status" value="1"/>
</dbReference>
<dbReference type="Pfam" id="PF08659">
    <property type="entry name" value="KR"/>
    <property type="match status" value="1"/>
</dbReference>
<dbReference type="Pfam" id="PF23114">
    <property type="entry name" value="NAD-bd_HRPKS_sdrA"/>
    <property type="match status" value="1"/>
</dbReference>
<dbReference type="Pfam" id="PF21089">
    <property type="entry name" value="PKS_DH_N"/>
    <property type="match status" value="1"/>
</dbReference>
<dbReference type="Pfam" id="PF14765">
    <property type="entry name" value="PS-DH"/>
    <property type="match status" value="1"/>
</dbReference>
<dbReference type="SMART" id="SM00827">
    <property type="entry name" value="PKS_AT"/>
    <property type="match status" value="1"/>
</dbReference>
<dbReference type="SMART" id="SM00826">
    <property type="entry name" value="PKS_DH"/>
    <property type="match status" value="1"/>
</dbReference>
<dbReference type="SMART" id="SM00829">
    <property type="entry name" value="PKS_ER"/>
    <property type="match status" value="1"/>
</dbReference>
<dbReference type="SMART" id="SM00822">
    <property type="entry name" value="PKS_KR"/>
    <property type="match status" value="1"/>
</dbReference>
<dbReference type="SMART" id="SM00825">
    <property type="entry name" value="PKS_KS"/>
    <property type="match status" value="1"/>
</dbReference>
<dbReference type="SMART" id="SM00823">
    <property type="entry name" value="PKS_PP"/>
    <property type="match status" value="1"/>
</dbReference>
<dbReference type="SUPFAM" id="SSF47336">
    <property type="entry name" value="ACP-like"/>
    <property type="match status" value="1"/>
</dbReference>
<dbReference type="SUPFAM" id="SSF52151">
    <property type="entry name" value="FabD/lysophospholipase-like"/>
    <property type="match status" value="1"/>
</dbReference>
<dbReference type="SUPFAM" id="SSF50129">
    <property type="entry name" value="GroES-like"/>
    <property type="match status" value="1"/>
</dbReference>
<dbReference type="SUPFAM" id="SSF51735">
    <property type="entry name" value="NAD(P)-binding Rossmann-fold domains"/>
    <property type="match status" value="2"/>
</dbReference>
<dbReference type="SUPFAM" id="SSF55048">
    <property type="entry name" value="Probable ACP-binding domain of malonyl-CoA ACP transacylase"/>
    <property type="match status" value="1"/>
</dbReference>
<dbReference type="SUPFAM" id="SSF53901">
    <property type="entry name" value="Thiolase-like"/>
    <property type="match status" value="1"/>
</dbReference>
<dbReference type="PROSITE" id="PS50075">
    <property type="entry name" value="CARRIER"/>
    <property type="match status" value="1"/>
</dbReference>
<dbReference type="PROSITE" id="PS52004">
    <property type="entry name" value="KS3_2"/>
    <property type="match status" value="1"/>
</dbReference>
<dbReference type="PROSITE" id="PS00012">
    <property type="entry name" value="PHOSPHOPANTETHEINE"/>
    <property type="match status" value="1"/>
</dbReference>
<dbReference type="PROSITE" id="PS52019">
    <property type="entry name" value="PKS_MFAS_DH"/>
    <property type="match status" value="1"/>
</dbReference>
<dbReference type="PROSITE" id="PS01162">
    <property type="entry name" value="QOR_ZETA_CRYSTAL"/>
    <property type="match status" value="1"/>
</dbReference>
<keyword id="KW-0012">Acyltransferase</keyword>
<keyword id="KW-0511">Multifunctional enzyme</keyword>
<keyword id="KW-0521">NADP</keyword>
<keyword id="KW-0560">Oxidoreductase</keyword>
<keyword id="KW-0596">Phosphopantetheine</keyword>
<keyword id="KW-0597">Phosphoprotein</keyword>
<keyword id="KW-0808">Transferase</keyword>
<evidence type="ECO:0000255" key="1"/>
<evidence type="ECO:0000255" key="2">
    <source>
        <dbReference type="PROSITE-ProRule" id="PRU00258"/>
    </source>
</evidence>
<evidence type="ECO:0000255" key="3">
    <source>
        <dbReference type="PROSITE-ProRule" id="PRU00590"/>
    </source>
</evidence>
<evidence type="ECO:0000255" key="4">
    <source>
        <dbReference type="PROSITE-ProRule" id="PRU01348"/>
    </source>
</evidence>
<evidence type="ECO:0000255" key="5">
    <source>
        <dbReference type="PROSITE-ProRule" id="PRU01363"/>
    </source>
</evidence>
<evidence type="ECO:0000269" key="6">
    <source>
    </source>
</evidence>
<evidence type="ECO:0000303" key="7">
    <source>
    </source>
</evidence>
<evidence type="ECO:0000305" key="8">
    <source>
    </source>
</evidence>
<reference key="1">
    <citation type="journal article" date="2008" name="Appl. Environ. Microbiol.">
        <title>Genes for the biosynthesis of the fungal polyketides hypothemycin from Hypomyces subiculosus and radicicol from Pochonia chlamydosporia.</title>
        <authorList>
            <person name="Reeves C.D."/>
            <person name="Hu Z."/>
            <person name="Reid R."/>
            <person name="Kealey J.T."/>
        </authorList>
    </citation>
    <scope>NUCLEOTIDE SEQUENCE [GENOMIC DNA]</scope>
    <scope>FUNCTION</scope>
    <source>
        <strain>ATCC 16683 / CBS 504.66</strain>
    </source>
</reference>
<reference key="2">
    <citation type="journal article" date="2009" name="Curr. Top. Med. Chem.">
        <title>Hsp90 inhibition with resorcyclic acid lactones (RALs).</title>
        <authorList>
            <person name="Winssinger N."/>
            <person name="Fontaine J.G."/>
            <person name="Barluenga S."/>
        </authorList>
    </citation>
    <scope>REVIEW ON BIOTECHNOLOGY</scope>
</reference>
<protein>
    <recommendedName>
        <fullName evidence="7">Reducing polyketide synthase rdc5</fullName>
        <shortName evidence="7">R-PKS rdc5</shortName>
        <ecNumber evidence="8">2.3.1.-</ecNumber>
    </recommendedName>
    <alternativeName>
        <fullName evidence="7">Hypothemycin biosynthesis cluster protein rdc5</fullName>
    </alternativeName>
</protein>
<accession>B3FWU0</accession>
<feature type="chain" id="PRO_0000437587" description="Reducing polyketide synthase rdc5">
    <location>
        <begin position="1"/>
        <end position="2383"/>
    </location>
</feature>
<feature type="domain" description="Ketosynthase family 3 (KS3)" evidence="4">
    <location>
        <begin position="10"/>
        <end position="438"/>
    </location>
</feature>
<feature type="domain" description="PKS/mFAS DH" evidence="5">
    <location>
        <begin position="930"/>
        <end position="1253"/>
    </location>
</feature>
<feature type="domain" description="Carrier" evidence="2">
    <location>
        <begin position="2300"/>
        <end position="2377"/>
    </location>
</feature>
<feature type="region of interest" description="Malonyl-CoA:ACP transacylase (MAT) domain" evidence="1">
    <location>
        <begin position="550"/>
        <end position="881"/>
    </location>
</feature>
<feature type="region of interest" description="N-terminal hotdog fold" evidence="5">
    <location>
        <begin position="930"/>
        <end position="1066"/>
    </location>
</feature>
<feature type="region of interest" description="Dehydratase (DH) domain" evidence="1">
    <location>
        <begin position="932"/>
        <end position="1250"/>
    </location>
</feature>
<feature type="region of interest" description="C-terminal hotdog fold" evidence="5">
    <location>
        <begin position="1094"/>
        <end position="1253"/>
    </location>
</feature>
<feature type="region of interest" description="Enoyl reductase (ER) domain" evidence="1">
    <location>
        <begin position="1663"/>
        <end position="1977"/>
    </location>
</feature>
<feature type="region of interest" description="Ketoreductase (KR) domain" evidence="1">
    <location>
        <begin position="2002"/>
        <end position="2182"/>
    </location>
</feature>
<feature type="active site" description="For beta-ketoacyl synthase activity" evidence="4">
    <location>
        <position position="186"/>
    </location>
</feature>
<feature type="active site" description="For beta-ketoacyl synthase activity" evidence="4">
    <location>
        <position position="321"/>
    </location>
</feature>
<feature type="active site" description="For beta-ketoacyl synthase activity" evidence="4">
    <location>
        <position position="361"/>
    </location>
</feature>
<feature type="active site" description="Proton acceptor; for dehydratase activity" evidence="5">
    <location>
        <position position="962"/>
    </location>
</feature>
<feature type="active site" description="Proton donor; for dehydratase activity" evidence="5">
    <location>
        <position position="1160"/>
    </location>
</feature>
<feature type="active site" description="Phosphocysteine intermediate" evidence="3">
    <location>
        <position position="1776"/>
    </location>
</feature>
<feature type="modified residue" description="O-(pantetheine 4'-phosphoryl)serine" evidence="2">
    <location>
        <position position="2337"/>
    </location>
</feature>
<name>RDC5_METCM</name>